<comment type="subcellular location">
    <subcellularLocation>
        <location evidence="3">Cell membrane</location>
        <topology evidence="3">Multi-pass membrane protein</topology>
    </subcellularLocation>
</comment>
<dbReference type="EMBL" id="CP000255">
    <property type="protein sequence ID" value="ABD22398.1"/>
    <property type="molecule type" value="Genomic_DNA"/>
</dbReference>
<dbReference type="SMR" id="Q2FIP5"/>
<dbReference type="KEGG" id="saa:SAUSA300_0730"/>
<dbReference type="HOGENOM" id="CLU_000445_11_1_9"/>
<dbReference type="OMA" id="GASVQMM"/>
<dbReference type="Proteomes" id="UP000001939">
    <property type="component" value="Chromosome"/>
</dbReference>
<dbReference type="GO" id="GO:0005886">
    <property type="term" value="C:plasma membrane"/>
    <property type="evidence" value="ECO:0007669"/>
    <property type="project" value="UniProtKB-SubCell"/>
</dbReference>
<dbReference type="GO" id="GO:0052621">
    <property type="term" value="F:diguanylate cyclase activity"/>
    <property type="evidence" value="ECO:0007669"/>
    <property type="project" value="TreeGrafter"/>
</dbReference>
<dbReference type="GO" id="GO:0000155">
    <property type="term" value="F:phosphorelay sensor kinase activity"/>
    <property type="evidence" value="ECO:0007669"/>
    <property type="project" value="InterPro"/>
</dbReference>
<dbReference type="GO" id="GO:0043709">
    <property type="term" value="P:cell adhesion involved in single-species biofilm formation"/>
    <property type="evidence" value="ECO:0007669"/>
    <property type="project" value="TreeGrafter"/>
</dbReference>
<dbReference type="GO" id="GO:0071555">
    <property type="term" value="P:cell wall organization"/>
    <property type="evidence" value="ECO:0007669"/>
    <property type="project" value="InterPro"/>
</dbReference>
<dbReference type="GO" id="GO:1902201">
    <property type="term" value="P:negative regulation of bacterial-type flagellum-dependent cell motility"/>
    <property type="evidence" value="ECO:0007669"/>
    <property type="project" value="TreeGrafter"/>
</dbReference>
<dbReference type="CDD" id="cd01949">
    <property type="entry name" value="GGDEF"/>
    <property type="match status" value="1"/>
</dbReference>
<dbReference type="FunFam" id="3.30.70.270:FF:000038">
    <property type="entry name" value="Diguanylate cyclase domain protein"/>
    <property type="match status" value="1"/>
</dbReference>
<dbReference type="Gene3D" id="3.30.70.270">
    <property type="match status" value="1"/>
</dbReference>
<dbReference type="InterPro" id="IPR050469">
    <property type="entry name" value="Diguanylate_Cyclase"/>
</dbReference>
<dbReference type="InterPro" id="IPR000160">
    <property type="entry name" value="GGDEF_dom"/>
</dbReference>
<dbReference type="InterPro" id="IPR029787">
    <property type="entry name" value="Nucleotide_cyclase"/>
</dbReference>
<dbReference type="InterPro" id="IPR043128">
    <property type="entry name" value="Rev_trsase/Diguanyl_cyclase"/>
</dbReference>
<dbReference type="InterPro" id="IPR011620">
    <property type="entry name" value="Sig_transdc_His_kinase_LytS_TM"/>
</dbReference>
<dbReference type="NCBIfam" id="TIGR00254">
    <property type="entry name" value="GGDEF"/>
    <property type="match status" value="1"/>
</dbReference>
<dbReference type="PANTHER" id="PTHR45138:SF9">
    <property type="entry name" value="DIGUANYLATE CYCLASE DGCM-RELATED"/>
    <property type="match status" value="1"/>
</dbReference>
<dbReference type="PANTHER" id="PTHR45138">
    <property type="entry name" value="REGULATORY COMPONENTS OF SENSORY TRANSDUCTION SYSTEM"/>
    <property type="match status" value="1"/>
</dbReference>
<dbReference type="Pfam" id="PF07694">
    <property type="entry name" value="5TM-5TMR_LYT"/>
    <property type="match status" value="1"/>
</dbReference>
<dbReference type="Pfam" id="PF00990">
    <property type="entry name" value="GGDEF"/>
    <property type="match status" value="1"/>
</dbReference>
<dbReference type="SMART" id="SM00267">
    <property type="entry name" value="GGDEF"/>
    <property type="match status" value="1"/>
</dbReference>
<dbReference type="SUPFAM" id="SSF55073">
    <property type="entry name" value="Nucleotide cyclase"/>
    <property type="match status" value="1"/>
</dbReference>
<dbReference type="PROSITE" id="PS50887">
    <property type="entry name" value="GGDEF"/>
    <property type="match status" value="1"/>
</dbReference>
<proteinExistence type="predicted"/>
<name>Y730_STAA3</name>
<feature type="chain" id="PRO_0000286960" description="Uncharacterized membrane protein SAUSA300_0730">
    <location>
        <begin position="1"/>
        <end position="356"/>
    </location>
</feature>
<feature type="transmembrane region" description="Helical" evidence="1">
    <location>
        <begin position="2"/>
        <end position="22"/>
    </location>
</feature>
<feature type="transmembrane region" description="Helical" evidence="1">
    <location>
        <begin position="35"/>
        <end position="55"/>
    </location>
</feature>
<feature type="transmembrane region" description="Helical" evidence="1">
    <location>
        <begin position="74"/>
        <end position="94"/>
    </location>
</feature>
<feature type="transmembrane region" description="Helical" evidence="1">
    <location>
        <begin position="99"/>
        <end position="119"/>
    </location>
</feature>
<feature type="transmembrane region" description="Helical" evidence="1">
    <location>
        <begin position="124"/>
        <end position="144"/>
    </location>
</feature>
<feature type="transmembrane region" description="Helical" evidence="1">
    <location>
        <begin position="154"/>
        <end position="174"/>
    </location>
</feature>
<feature type="domain" description="GGDEF" evidence="2">
    <location>
        <begin position="218"/>
        <end position="353"/>
    </location>
</feature>
<reference key="1">
    <citation type="journal article" date="2006" name="Lancet">
        <title>Complete genome sequence of USA300, an epidemic clone of community-acquired meticillin-resistant Staphylococcus aureus.</title>
        <authorList>
            <person name="Diep B.A."/>
            <person name="Gill S.R."/>
            <person name="Chang R.F."/>
            <person name="Phan T.H."/>
            <person name="Chen J.H."/>
            <person name="Davidson M.G."/>
            <person name="Lin F."/>
            <person name="Lin J."/>
            <person name="Carleton H.A."/>
            <person name="Mongodin E.F."/>
            <person name="Sensabaugh G.F."/>
            <person name="Perdreau-Remington F."/>
        </authorList>
    </citation>
    <scope>NUCLEOTIDE SEQUENCE [LARGE SCALE GENOMIC DNA]</scope>
    <source>
        <strain>USA300</strain>
    </source>
</reference>
<accession>Q2FIP5</accession>
<organism>
    <name type="scientific">Staphylococcus aureus (strain USA300)</name>
    <dbReference type="NCBI Taxonomy" id="367830"/>
    <lineage>
        <taxon>Bacteria</taxon>
        <taxon>Bacillati</taxon>
        <taxon>Bacillota</taxon>
        <taxon>Bacilli</taxon>
        <taxon>Bacillales</taxon>
        <taxon>Staphylococcaceae</taxon>
        <taxon>Staphylococcus</taxon>
    </lineage>
</organism>
<gene>
    <name type="ordered locus">SAUSA300_0730</name>
</gene>
<sequence length="356" mass="40345">MFEAFIYNISVIVAGIYLFHRLQYSENKRMVFSKAYVTVLMTIVSLLLSVYPIPYREDYLIHLTFVPLLFLGRFTNMVYTLSATVIVAIVEIVVFNNSIMYGVTLIVIAAVTSAIGPFLKQNDVLSLLILNVVTIIILFGVALVSPIYTLSEVIILIPISLIITLASAITFVDIWHFFSLVNRYENEDKYDYLTGLGNVKEFDRHLNEISRKAEKEHQSIALLLIDIDGFKDVNDTYSHKSGDAVLKQMSQLLKNYVPNQFKIFRNGGEEFSVVIHNYSLDQSVKLAENIRSGVEKSSFHLPNKEVIKLSVSIGVGYLTDDDPKSQRKVFKDADDMVHVAKNQGRNKVMFNPIINL</sequence>
<protein>
    <recommendedName>
        <fullName>Uncharacterized membrane protein SAUSA300_0730</fullName>
    </recommendedName>
</protein>
<keyword id="KW-1003">Cell membrane</keyword>
<keyword id="KW-0472">Membrane</keyword>
<keyword id="KW-0812">Transmembrane</keyword>
<keyword id="KW-1133">Transmembrane helix</keyword>
<evidence type="ECO:0000255" key="1"/>
<evidence type="ECO:0000255" key="2">
    <source>
        <dbReference type="PROSITE-ProRule" id="PRU00095"/>
    </source>
</evidence>
<evidence type="ECO:0000305" key="3"/>